<reference key="1">
    <citation type="journal article" date="2007" name="PLoS Genet.">
        <title>Patterns and implications of gene gain and loss in the evolution of Prochlorococcus.</title>
        <authorList>
            <person name="Kettler G.C."/>
            <person name="Martiny A.C."/>
            <person name="Huang K."/>
            <person name="Zucker J."/>
            <person name="Coleman M.L."/>
            <person name="Rodrigue S."/>
            <person name="Chen F."/>
            <person name="Lapidus A."/>
            <person name="Ferriera S."/>
            <person name="Johnson J."/>
            <person name="Steglich C."/>
            <person name="Church G.M."/>
            <person name="Richardson P."/>
            <person name="Chisholm S.W."/>
        </authorList>
    </citation>
    <scope>NUCLEOTIDE SEQUENCE [LARGE SCALE GENOMIC DNA]</scope>
    <source>
        <strain>MIT 9515</strain>
    </source>
</reference>
<name>FBSB_PROM5</name>
<organism>
    <name type="scientific">Prochlorococcus marinus (strain MIT 9515)</name>
    <dbReference type="NCBI Taxonomy" id="167542"/>
    <lineage>
        <taxon>Bacteria</taxon>
        <taxon>Bacillati</taxon>
        <taxon>Cyanobacteriota</taxon>
        <taxon>Cyanophyceae</taxon>
        <taxon>Synechococcales</taxon>
        <taxon>Prochlorococcaceae</taxon>
        <taxon>Prochlorococcus</taxon>
    </lineage>
</organism>
<dbReference type="EC" id="3.1.3.11"/>
<dbReference type="EC" id="3.1.3.37"/>
<dbReference type="EMBL" id="CP000552">
    <property type="protein sequence ID" value="ABM72025.1"/>
    <property type="molecule type" value="Genomic_DNA"/>
</dbReference>
<dbReference type="RefSeq" id="WP_011820130.1">
    <property type="nucleotide sequence ID" value="NC_008817.1"/>
</dbReference>
<dbReference type="SMR" id="A2BW64"/>
<dbReference type="STRING" id="167542.P9515_08161"/>
<dbReference type="GeneID" id="60200995"/>
<dbReference type="KEGG" id="pmc:P9515_08161"/>
<dbReference type="eggNOG" id="COG1494">
    <property type="taxonomic scope" value="Bacteria"/>
</dbReference>
<dbReference type="HOGENOM" id="CLU_054938_0_0_3"/>
<dbReference type="OrthoDB" id="9779353at2"/>
<dbReference type="UniPathway" id="UPA00116"/>
<dbReference type="Proteomes" id="UP000001589">
    <property type="component" value="Chromosome"/>
</dbReference>
<dbReference type="GO" id="GO:0005829">
    <property type="term" value="C:cytosol"/>
    <property type="evidence" value="ECO:0007669"/>
    <property type="project" value="TreeGrafter"/>
</dbReference>
<dbReference type="GO" id="GO:0042132">
    <property type="term" value="F:fructose 1,6-bisphosphate 1-phosphatase activity"/>
    <property type="evidence" value="ECO:0007669"/>
    <property type="project" value="UniProtKB-EC"/>
</dbReference>
<dbReference type="GO" id="GO:0046872">
    <property type="term" value="F:metal ion binding"/>
    <property type="evidence" value="ECO:0007669"/>
    <property type="project" value="UniProtKB-KW"/>
</dbReference>
<dbReference type="GO" id="GO:0050278">
    <property type="term" value="F:sedoheptulose-bisphosphatase activity"/>
    <property type="evidence" value="ECO:0007669"/>
    <property type="project" value="UniProtKB-EC"/>
</dbReference>
<dbReference type="GO" id="GO:0030388">
    <property type="term" value="P:fructose 1,6-bisphosphate metabolic process"/>
    <property type="evidence" value="ECO:0007669"/>
    <property type="project" value="TreeGrafter"/>
</dbReference>
<dbReference type="GO" id="GO:0006094">
    <property type="term" value="P:gluconeogenesis"/>
    <property type="evidence" value="ECO:0007669"/>
    <property type="project" value="InterPro"/>
</dbReference>
<dbReference type="GO" id="GO:0006071">
    <property type="term" value="P:glycerol metabolic process"/>
    <property type="evidence" value="ECO:0007669"/>
    <property type="project" value="InterPro"/>
</dbReference>
<dbReference type="GO" id="GO:0019253">
    <property type="term" value="P:reductive pentose-phosphate cycle"/>
    <property type="evidence" value="ECO:0007669"/>
    <property type="project" value="UniProtKB-UniPathway"/>
</dbReference>
<dbReference type="CDD" id="cd01516">
    <property type="entry name" value="FBPase_glpX"/>
    <property type="match status" value="1"/>
</dbReference>
<dbReference type="FunFam" id="3.40.190.90:FF:000001">
    <property type="entry name" value="Fructose-1,6-bisphosphatase"/>
    <property type="match status" value="1"/>
</dbReference>
<dbReference type="Gene3D" id="3.40.190.90">
    <property type="match status" value="1"/>
</dbReference>
<dbReference type="Gene3D" id="3.30.540.10">
    <property type="entry name" value="Fructose-1,6-Bisphosphatase, subunit A, domain 1"/>
    <property type="match status" value="1"/>
</dbReference>
<dbReference type="InterPro" id="IPR004464">
    <property type="entry name" value="FBPase_class-2/SBPase"/>
</dbReference>
<dbReference type="NCBIfam" id="TIGR00330">
    <property type="entry name" value="glpX"/>
    <property type="match status" value="1"/>
</dbReference>
<dbReference type="PANTHER" id="PTHR30447:SF0">
    <property type="entry name" value="FRUCTOSE-1,6-BISPHOSPHATASE 1 CLASS 2-RELATED"/>
    <property type="match status" value="1"/>
</dbReference>
<dbReference type="PANTHER" id="PTHR30447">
    <property type="entry name" value="FRUCTOSE-1,6-BISPHOSPHATASE CLASS 2"/>
    <property type="match status" value="1"/>
</dbReference>
<dbReference type="Pfam" id="PF03320">
    <property type="entry name" value="FBPase_glpX"/>
    <property type="match status" value="1"/>
</dbReference>
<dbReference type="PIRSF" id="PIRSF004532">
    <property type="entry name" value="GlpX"/>
    <property type="match status" value="1"/>
</dbReference>
<dbReference type="SUPFAM" id="SSF56655">
    <property type="entry name" value="Carbohydrate phosphatase"/>
    <property type="match status" value="1"/>
</dbReference>
<sequence>MNQTLIQEILEVVEQAAIASAKLTGLGQKDEADAAAVEAMRLRMGKIEMKGKIVIGEGERDEAPMLYIGEEVGSGNGPGVDFAVDPCEGTNLCANNQRGSMAVLAASDTGGLFNAPDFYMNKLAAPPAAKGKVDIRNSATENLKILSNCLDLAIDELTVVVMDRARHKGLIKEIRECGAKIQPISDGDVQAAIACGFAGTGTHCLMGIGAAPEGVISAAAMRALGGHFQGQLVYDPSIAQTSEWADYTKEGNIKRLNEMGITDIDKIYEANELASGENVIFAGSGITDGLLFDGVKFEKDCTRTSSLVISTLDSTCRFTNTIHMKDGAKSINL</sequence>
<comment type="function">
    <text evidence="1">Catalyzes the hydrolysis of fructose 1,6-bisphosphate (Fru 1,6-P2) and sedoheptulose 1,7-bisphosphate (Sed 1,7-P2) to fructose 6-phosphate and sedoheptulose 7-phosphate, respectively.</text>
</comment>
<comment type="catalytic activity">
    <reaction>
        <text>beta-D-fructose 1,6-bisphosphate + H2O = beta-D-fructose 6-phosphate + phosphate</text>
        <dbReference type="Rhea" id="RHEA:11064"/>
        <dbReference type="ChEBI" id="CHEBI:15377"/>
        <dbReference type="ChEBI" id="CHEBI:32966"/>
        <dbReference type="ChEBI" id="CHEBI:43474"/>
        <dbReference type="ChEBI" id="CHEBI:57634"/>
        <dbReference type="EC" id="3.1.3.11"/>
    </reaction>
</comment>
<comment type="catalytic activity">
    <reaction>
        <text>D-sedoheptulose 1,7-bisphosphate + H2O = D-sedoheptulose 7-phosphate + phosphate</text>
        <dbReference type="Rhea" id="RHEA:17461"/>
        <dbReference type="ChEBI" id="CHEBI:15377"/>
        <dbReference type="ChEBI" id="CHEBI:43474"/>
        <dbReference type="ChEBI" id="CHEBI:57483"/>
        <dbReference type="ChEBI" id="CHEBI:58335"/>
        <dbReference type="EC" id="3.1.3.37"/>
    </reaction>
</comment>
<comment type="cofactor">
    <cofactor evidence="1">
        <name>Mn(2+)</name>
        <dbReference type="ChEBI" id="CHEBI:29035"/>
    </cofactor>
</comment>
<comment type="pathway">
    <text>Carbohydrate biosynthesis; Calvin cycle.</text>
</comment>
<comment type="subunit">
    <text evidence="1">Homotetramer.</text>
</comment>
<comment type="similarity">
    <text evidence="2">Belongs to the FBPase class 2 family.</text>
</comment>
<evidence type="ECO:0000250" key="1"/>
<evidence type="ECO:0000305" key="2"/>
<protein>
    <recommendedName>
        <fullName>D-fructose 1,6-bisphosphatase class 2/sedoheptulose 1,7-bisphosphatase</fullName>
        <shortName>FBPase class 2/SBPase</shortName>
        <ecNumber>3.1.3.11</ecNumber>
        <ecNumber>3.1.3.37</ecNumber>
    </recommendedName>
</protein>
<proteinExistence type="inferred from homology"/>
<accession>A2BW64</accession>
<gene>
    <name type="ordered locus">P9515_08161</name>
</gene>
<feature type="chain" id="PRO_0000342720" description="D-fructose 1,6-bisphosphatase class 2/sedoheptulose 1,7-bisphosphatase">
    <location>
        <begin position="1"/>
        <end position="333"/>
    </location>
</feature>
<feature type="binding site" evidence="1">
    <location>
        <position position="33"/>
    </location>
    <ligand>
        <name>Mn(2+)</name>
        <dbReference type="ChEBI" id="CHEBI:29035"/>
        <label>1</label>
    </ligand>
</feature>
<feature type="binding site" evidence="1">
    <location>
        <position position="57"/>
    </location>
    <ligand>
        <name>Mn(2+)</name>
        <dbReference type="ChEBI" id="CHEBI:29035"/>
        <label>1</label>
    </ligand>
</feature>
<feature type="binding site" evidence="1">
    <location>
        <position position="85"/>
    </location>
    <ligand>
        <name>Mn(2+)</name>
        <dbReference type="ChEBI" id="CHEBI:29035"/>
        <label>2</label>
    </ligand>
</feature>
<feature type="binding site" evidence="1">
    <location>
        <begin position="88"/>
        <end position="90"/>
    </location>
    <ligand>
        <name>substrate</name>
    </ligand>
</feature>
<feature type="binding site" evidence="1">
    <location>
        <position position="88"/>
    </location>
    <ligand>
        <name>Mn(2+)</name>
        <dbReference type="ChEBI" id="CHEBI:29035"/>
        <label>2</label>
    </ligand>
</feature>
<feature type="binding site" evidence="1">
    <location>
        <position position="119"/>
    </location>
    <ligand>
        <name>substrate</name>
    </ligand>
</feature>
<feature type="binding site" evidence="1">
    <location>
        <begin position="164"/>
        <end position="166"/>
    </location>
    <ligand>
        <name>substrate</name>
    </ligand>
</feature>
<feature type="binding site" evidence="1">
    <location>
        <begin position="186"/>
        <end position="188"/>
    </location>
    <ligand>
        <name>substrate</name>
    </ligand>
</feature>
<feature type="binding site" evidence="1">
    <location>
        <position position="213"/>
    </location>
    <ligand>
        <name>Mn(2+)</name>
        <dbReference type="ChEBI" id="CHEBI:29035"/>
        <label>2</label>
    </ligand>
</feature>
<keyword id="KW-0113">Calvin cycle</keyword>
<keyword id="KW-0119">Carbohydrate metabolism</keyword>
<keyword id="KW-0378">Hydrolase</keyword>
<keyword id="KW-0464">Manganese</keyword>
<keyword id="KW-0479">Metal-binding</keyword>